<gene>
    <name type="ordered locus">llmg_0242</name>
</gene>
<dbReference type="EMBL" id="AM406671">
    <property type="protein sequence ID" value="CAL96848.1"/>
    <property type="molecule type" value="Genomic_DNA"/>
</dbReference>
<dbReference type="RefSeq" id="WP_011834324.1">
    <property type="nucleotide sequence ID" value="NC_009004.1"/>
</dbReference>
<dbReference type="SMR" id="A2RHW1"/>
<dbReference type="STRING" id="416870.llmg_0242"/>
<dbReference type="GeneID" id="61108546"/>
<dbReference type="KEGG" id="llm:llmg_0242"/>
<dbReference type="eggNOG" id="COG0217">
    <property type="taxonomic scope" value="Bacteria"/>
</dbReference>
<dbReference type="HOGENOM" id="CLU_062974_2_0_9"/>
<dbReference type="OrthoDB" id="9781053at2"/>
<dbReference type="PhylomeDB" id="A2RHW1"/>
<dbReference type="Proteomes" id="UP000000364">
    <property type="component" value="Chromosome"/>
</dbReference>
<dbReference type="GO" id="GO:0005829">
    <property type="term" value="C:cytosol"/>
    <property type="evidence" value="ECO:0007669"/>
    <property type="project" value="TreeGrafter"/>
</dbReference>
<dbReference type="GO" id="GO:0003677">
    <property type="term" value="F:DNA binding"/>
    <property type="evidence" value="ECO:0007669"/>
    <property type="project" value="UniProtKB-UniRule"/>
</dbReference>
<dbReference type="GO" id="GO:0006355">
    <property type="term" value="P:regulation of DNA-templated transcription"/>
    <property type="evidence" value="ECO:0007669"/>
    <property type="project" value="UniProtKB-UniRule"/>
</dbReference>
<dbReference type="FunFam" id="1.10.10.200:FF:000003">
    <property type="entry name" value="Probable transcriptional regulatory protein YeeN"/>
    <property type="match status" value="1"/>
</dbReference>
<dbReference type="FunFam" id="3.30.70.980:FF:000004">
    <property type="entry name" value="Probable transcriptional regulatory protein YeeN"/>
    <property type="match status" value="1"/>
</dbReference>
<dbReference type="Gene3D" id="1.10.10.200">
    <property type="match status" value="1"/>
</dbReference>
<dbReference type="Gene3D" id="3.30.70.980">
    <property type="match status" value="2"/>
</dbReference>
<dbReference type="HAMAP" id="MF_00693">
    <property type="entry name" value="Transcrip_reg_TACO1"/>
    <property type="match status" value="1"/>
</dbReference>
<dbReference type="HAMAP" id="MF_00918">
    <property type="entry name" value="Transcrip_reg_TACO1_YeeN"/>
    <property type="match status" value="1"/>
</dbReference>
<dbReference type="InterPro" id="IPR017856">
    <property type="entry name" value="Integrase-like_N"/>
</dbReference>
<dbReference type="InterPro" id="IPR048300">
    <property type="entry name" value="TACO1_YebC-like_2nd/3rd_dom"/>
</dbReference>
<dbReference type="InterPro" id="IPR049083">
    <property type="entry name" value="TACO1_YebC_N"/>
</dbReference>
<dbReference type="InterPro" id="IPR002876">
    <property type="entry name" value="Transcrip_reg_TACO1-like"/>
</dbReference>
<dbReference type="InterPro" id="IPR026564">
    <property type="entry name" value="Transcrip_reg_TACO1-like_dom3"/>
</dbReference>
<dbReference type="InterPro" id="IPR026562">
    <property type="entry name" value="Transcrip_reg_TACO1_YeeN"/>
</dbReference>
<dbReference type="InterPro" id="IPR029072">
    <property type="entry name" value="YebC-like"/>
</dbReference>
<dbReference type="NCBIfam" id="NF009044">
    <property type="entry name" value="PRK12378.1"/>
    <property type="match status" value="1"/>
</dbReference>
<dbReference type="NCBIfam" id="TIGR01033">
    <property type="entry name" value="YebC/PmpR family DNA-binding transcriptional regulator"/>
    <property type="match status" value="1"/>
</dbReference>
<dbReference type="PANTHER" id="PTHR12532">
    <property type="entry name" value="TRANSLATIONAL ACTIVATOR OF CYTOCHROME C OXIDASE 1"/>
    <property type="match status" value="1"/>
</dbReference>
<dbReference type="PANTHER" id="PTHR12532:SF0">
    <property type="entry name" value="TRANSLATIONAL ACTIVATOR OF CYTOCHROME C OXIDASE 1"/>
    <property type="match status" value="1"/>
</dbReference>
<dbReference type="Pfam" id="PF20772">
    <property type="entry name" value="TACO1_YebC_N"/>
    <property type="match status" value="1"/>
</dbReference>
<dbReference type="Pfam" id="PF01709">
    <property type="entry name" value="Transcrip_reg"/>
    <property type="match status" value="1"/>
</dbReference>
<dbReference type="SUPFAM" id="SSF75625">
    <property type="entry name" value="YebC-like"/>
    <property type="match status" value="1"/>
</dbReference>
<comment type="subcellular location">
    <subcellularLocation>
        <location evidence="1">Cytoplasm</location>
    </subcellularLocation>
</comment>
<comment type="similarity">
    <text evidence="1">Belongs to the TACO1 family. YeeN subfamily.</text>
</comment>
<sequence>MGRKWANIVAKKTAKDGATSKVYAKFGVEIYAAAKQGEPDPESNSSLKFVIERAKQAQVPKHVIDKAIDKAKGGGDETFVQGRYEGFGPNGSMVIAETLTSNVNRTIANVRTTFHKNGGNIGAAGAVSYMFDNTGVIVFEGTDPDHIFEILLDAEVDVRDVTEEEGNIVVYTEPTDLHKGIAALKAAGITEFSTTELEMIAQSEVELSPEDLEIFEGLVDALEDDDDVQKVYHNVANL</sequence>
<keyword id="KW-0963">Cytoplasm</keyword>
<keyword id="KW-0238">DNA-binding</keyword>
<keyword id="KW-0804">Transcription</keyword>
<keyword id="KW-0805">Transcription regulation</keyword>
<name>Y242_LACLM</name>
<organism>
    <name type="scientific">Lactococcus lactis subsp. cremoris (strain MG1363)</name>
    <dbReference type="NCBI Taxonomy" id="416870"/>
    <lineage>
        <taxon>Bacteria</taxon>
        <taxon>Bacillati</taxon>
        <taxon>Bacillota</taxon>
        <taxon>Bacilli</taxon>
        <taxon>Lactobacillales</taxon>
        <taxon>Streptococcaceae</taxon>
        <taxon>Lactococcus</taxon>
        <taxon>Lactococcus cremoris subsp. cremoris</taxon>
    </lineage>
</organism>
<protein>
    <recommendedName>
        <fullName evidence="1">Probable transcriptional regulatory protein llmg_0242</fullName>
    </recommendedName>
</protein>
<reference key="1">
    <citation type="journal article" date="2007" name="J. Bacteriol.">
        <title>The complete genome sequence of the lactic acid bacterial paradigm Lactococcus lactis subsp. cremoris MG1363.</title>
        <authorList>
            <person name="Wegmann U."/>
            <person name="O'Connell-Motherway M."/>
            <person name="Zomer A."/>
            <person name="Buist G."/>
            <person name="Shearman C."/>
            <person name="Canchaya C."/>
            <person name="Ventura M."/>
            <person name="Goesmann A."/>
            <person name="Gasson M.J."/>
            <person name="Kuipers O.P."/>
            <person name="van Sinderen D."/>
            <person name="Kok J."/>
        </authorList>
    </citation>
    <scope>NUCLEOTIDE SEQUENCE [LARGE SCALE GENOMIC DNA]</scope>
    <source>
        <strain>MG1363</strain>
    </source>
</reference>
<accession>A2RHW1</accession>
<evidence type="ECO:0000255" key="1">
    <source>
        <dbReference type="HAMAP-Rule" id="MF_00918"/>
    </source>
</evidence>
<feature type="chain" id="PRO_1000045327" description="Probable transcriptional regulatory protein llmg_0242">
    <location>
        <begin position="1"/>
        <end position="238"/>
    </location>
</feature>
<proteinExistence type="inferred from homology"/>